<feature type="chain" id="PRO_0000370873" description="ATP synthase subunit delta">
    <location>
        <begin position="1"/>
        <end position="177"/>
    </location>
</feature>
<gene>
    <name evidence="1" type="primary">atpH</name>
    <name type="ordered locus">ASA_4353</name>
</gene>
<reference key="1">
    <citation type="journal article" date="2008" name="BMC Genomics">
        <title>The genome of Aeromonas salmonicida subsp. salmonicida A449: insights into the evolution of a fish pathogen.</title>
        <authorList>
            <person name="Reith M.E."/>
            <person name="Singh R.K."/>
            <person name="Curtis B."/>
            <person name="Boyd J.M."/>
            <person name="Bouevitch A."/>
            <person name="Kimball J."/>
            <person name="Munholland J."/>
            <person name="Murphy C."/>
            <person name="Sarty D."/>
            <person name="Williams J."/>
            <person name="Nash J.H."/>
            <person name="Johnson S.C."/>
            <person name="Brown L.L."/>
        </authorList>
    </citation>
    <scope>NUCLEOTIDE SEQUENCE [LARGE SCALE GENOMIC DNA]</scope>
    <source>
        <strain>A449</strain>
    </source>
</reference>
<sequence>MSELTTIARPYAKAAFEFAVEHKAVDQWLGMLGFAAQVAENETIHNLVHGSVAAEELANLFVGVCGEQLDEHGQNLIRVMAENGRLGVLPAVLAEFVAFKAELDKEVQADVISAIELTDQQKANIQASLEKRLARKVKLNCSMDASLMAGVLIKAGDLVIDGSVRGKLDRMADALQS</sequence>
<comment type="function">
    <text evidence="1">F(1)F(0) ATP synthase produces ATP from ADP in the presence of a proton or sodium gradient. F-type ATPases consist of two structural domains, F(1) containing the extramembraneous catalytic core and F(0) containing the membrane proton channel, linked together by a central stalk and a peripheral stalk. During catalysis, ATP synthesis in the catalytic domain of F(1) is coupled via a rotary mechanism of the central stalk subunits to proton translocation.</text>
</comment>
<comment type="function">
    <text evidence="1">This protein is part of the stalk that links CF(0) to CF(1). It either transmits conformational changes from CF(0) to CF(1) or is implicated in proton conduction.</text>
</comment>
<comment type="subunit">
    <text evidence="1">F-type ATPases have 2 components, F(1) - the catalytic core - and F(0) - the membrane proton channel. F(1) has five subunits: alpha(3), beta(3), gamma(1), delta(1), epsilon(1). F(0) has three main subunits: a(1), b(2) and c(10-14). The alpha and beta chains form an alternating ring which encloses part of the gamma chain. F(1) is attached to F(0) by a central stalk formed by the gamma and epsilon chains, while a peripheral stalk is formed by the delta and b chains.</text>
</comment>
<comment type="subcellular location">
    <subcellularLocation>
        <location evidence="1">Cell inner membrane</location>
        <topology evidence="1">Peripheral membrane protein</topology>
    </subcellularLocation>
</comment>
<comment type="similarity">
    <text evidence="1">Belongs to the ATPase delta chain family.</text>
</comment>
<organism>
    <name type="scientific">Aeromonas salmonicida (strain A449)</name>
    <dbReference type="NCBI Taxonomy" id="382245"/>
    <lineage>
        <taxon>Bacteria</taxon>
        <taxon>Pseudomonadati</taxon>
        <taxon>Pseudomonadota</taxon>
        <taxon>Gammaproteobacteria</taxon>
        <taxon>Aeromonadales</taxon>
        <taxon>Aeromonadaceae</taxon>
        <taxon>Aeromonas</taxon>
    </lineage>
</organism>
<keyword id="KW-0066">ATP synthesis</keyword>
<keyword id="KW-0997">Cell inner membrane</keyword>
<keyword id="KW-1003">Cell membrane</keyword>
<keyword id="KW-0139">CF(1)</keyword>
<keyword id="KW-0375">Hydrogen ion transport</keyword>
<keyword id="KW-0406">Ion transport</keyword>
<keyword id="KW-0472">Membrane</keyword>
<keyword id="KW-0813">Transport</keyword>
<proteinExistence type="inferred from homology"/>
<protein>
    <recommendedName>
        <fullName evidence="1">ATP synthase subunit delta</fullName>
    </recommendedName>
    <alternativeName>
        <fullName evidence="1">ATP synthase F(1) sector subunit delta</fullName>
    </alternativeName>
    <alternativeName>
        <fullName evidence="1">F-type ATPase subunit delta</fullName>
        <shortName evidence="1">F-ATPase subunit delta</shortName>
    </alternativeName>
</protein>
<name>ATPD_AERS4</name>
<accession>A4STP6</accession>
<evidence type="ECO:0000255" key="1">
    <source>
        <dbReference type="HAMAP-Rule" id="MF_01416"/>
    </source>
</evidence>
<dbReference type="EMBL" id="CP000644">
    <property type="protein sequence ID" value="ABO92268.1"/>
    <property type="molecule type" value="Genomic_DNA"/>
</dbReference>
<dbReference type="RefSeq" id="WP_005319621.1">
    <property type="nucleotide sequence ID" value="NC_009348.1"/>
</dbReference>
<dbReference type="SMR" id="A4STP6"/>
<dbReference type="STRING" id="29491.GCA_000820065_00588"/>
<dbReference type="GeneID" id="79882024"/>
<dbReference type="KEGG" id="asa:ASA_4353"/>
<dbReference type="eggNOG" id="COG0712">
    <property type="taxonomic scope" value="Bacteria"/>
</dbReference>
<dbReference type="HOGENOM" id="CLU_085114_3_0_6"/>
<dbReference type="Proteomes" id="UP000000225">
    <property type="component" value="Chromosome"/>
</dbReference>
<dbReference type="GO" id="GO:0005886">
    <property type="term" value="C:plasma membrane"/>
    <property type="evidence" value="ECO:0007669"/>
    <property type="project" value="UniProtKB-SubCell"/>
</dbReference>
<dbReference type="GO" id="GO:0045259">
    <property type="term" value="C:proton-transporting ATP synthase complex"/>
    <property type="evidence" value="ECO:0007669"/>
    <property type="project" value="UniProtKB-KW"/>
</dbReference>
<dbReference type="GO" id="GO:0046933">
    <property type="term" value="F:proton-transporting ATP synthase activity, rotational mechanism"/>
    <property type="evidence" value="ECO:0007669"/>
    <property type="project" value="UniProtKB-UniRule"/>
</dbReference>
<dbReference type="Gene3D" id="1.10.520.20">
    <property type="entry name" value="N-terminal domain of the delta subunit of the F1F0-ATP synthase"/>
    <property type="match status" value="1"/>
</dbReference>
<dbReference type="HAMAP" id="MF_01416">
    <property type="entry name" value="ATP_synth_delta_bact"/>
    <property type="match status" value="1"/>
</dbReference>
<dbReference type="InterPro" id="IPR026015">
    <property type="entry name" value="ATP_synth_OSCP/delta_N_sf"/>
</dbReference>
<dbReference type="InterPro" id="IPR020781">
    <property type="entry name" value="ATPase_OSCP/d_CS"/>
</dbReference>
<dbReference type="InterPro" id="IPR000711">
    <property type="entry name" value="ATPase_OSCP/dsu"/>
</dbReference>
<dbReference type="NCBIfam" id="TIGR01145">
    <property type="entry name" value="ATP_synt_delta"/>
    <property type="match status" value="1"/>
</dbReference>
<dbReference type="NCBIfam" id="NF004402">
    <property type="entry name" value="PRK05758.2-2"/>
    <property type="match status" value="1"/>
</dbReference>
<dbReference type="NCBIfam" id="NF004404">
    <property type="entry name" value="PRK05758.2-5"/>
    <property type="match status" value="1"/>
</dbReference>
<dbReference type="PANTHER" id="PTHR11910">
    <property type="entry name" value="ATP SYNTHASE DELTA CHAIN"/>
    <property type="match status" value="1"/>
</dbReference>
<dbReference type="Pfam" id="PF00213">
    <property type="entry name" value="OSCP"/>
    <property type="match status" value="1"/>
</dbReference>
<dbReference type="PRINTS" id="PR00125">
    <property type="entry name" value="ATPASEDELTA"/>
</dbReference>
<dbReference type="SUPFAM" id="SSF47928">
    <property type="entry name" value="N-terminal domain of the delta subunit of the F1F0-ATP synthase"/>
    <property type="match status" value="1"/>
</dbReference>
<dbReference type="PROSITE" id="PS00389">
    <property type="entry name" value="ATPASE_DELTA"/>
    <property type="match status" value="1"/>
</dbReference>